<sequence>MDLQYFILAFSSIFSILNPFGAVPVFITLTESYPKKERDLVAKKTVIYALAILLAFALFGEWILKFFGISLDAFKIAGGILLLLISLDMVRGQQEAKIHRKEIEAAYEIDEIALMPLATPLLAGPGSITACMVAMAEASDIGDKFLVILAILLSLGITYLTLLSAESVLDRIGRLGIRILTRMMGLILTAIAVQMIVNGIRGALL</sequence>
<feature type="chain" id="PRO_0000156918" description="UPF0056 membrane protein MJ1677">
    <location>
        <begin position="1"/>
        <end position="205"/>
    </location>
</feature>
<feature type="transmembrane region" description="Helical" evidence="1">
    <location>
        <begin position="7"/>
        <end position="27"/>
    </location>
</feature>
<feature type="transmembrane region" description="Helical" evidence="1">
    <location>
        <begin position="49"/>
        <end position="69"/>
    </location>
</feature>
<feature type="transmembrane region" description="Helical" evidence="1">
    <location>
        <begin position="70"/>
        <end position="90"/>
    </location>
</feature>
<feature type="transmembrane region" description="Helical" evidence="1">
    <location>
        <begin position="112"/>
        <end position="132"/>
    </location>
</feature>
<feature type="transmembrane region" description="Helical" evidence="1">
    <location>
        <begin position="145"/>
        <end position="165"/>
    </location>
</feature>
<feature type="transmembrane region" description="Helical" evidence="1">
    <location>
        <begin position="185"/>
        <end position="205"/>
    </location>
</feature>
<comment type="subcellular location">
    <subcellularLocation>
        <location evidence="2">Cell membrane</location>
        <topology evidence="2">Multi-pass membrane protein</topology>
    </subcellularLocation>
</comment>
<comment type="similarity">
    <text evidence="2">Belongs to the UPF0056 (MarC) family.</text>
</comment>
<name>Y1677_METJA</name>
<organism>
    <name type="scientific">Methanocaldococcus jannaschii (strain ATCC 43067 / DSM 2661 / JAL-1 / JCM 10045 / NBRC 100440)</name>
    <name type="common">Methanococcus jannaschii</name>
    <dbReference type="NCBI Taxonomy" id="243232"/>
    <lineage>
        <taxon>Archaea</taxon>
        <taxon>Methanobacteriati</taxon>
        <taxon>Methanobacteriota</taxon>
        <taxon>Methanomada group</taxon>
        <taxon>Methanococci</taxon>
        <taxon>Methanococcales</taxon>
        <taxon>Methanocaldococcaceae</taxon>
        <taxon>Methanocaldococcus</taxon>
    </lineage>
</organism>
<evidence type="ECO:0000255" key="1"/>
<evidence type="ECO:0000305" key="2"/>
<reference key="1">
    <citation type="journal article" date="1996" name="Science">
        <title>Complete genome sequence of the methanogenic archaeon, Methanococcus jannaschii.</title>
        <authorList>
            <person name="Bult C.J."/>
            <person name="White O."/>
            <person name="Olsen G.J."/>
            <person name="Zhou L."/>
            <person name="Fleischmann R.D."/>
            <person name="Sutton G.G."/>
            <person name="Blake J.A."/>
            <person name="FitzGerald L.M."/>
            <person name="Clayton R.A."/>
            <person name="Gocayne J.D."/>
            <person name="Kerlavage A.R."/>
            <person name="Dougherty B.A."/>
            <person name="Tomb J.-F."/>
            <person name="Adams M.D."/>
            <person name="Reich C.I."/>
            <person name="Overbeek R."/>
            <person name="Kirkness E.F."/>
            <person name="Weinstock K.G."/>
            <person name="Merrick J.M."/>
            <person name="Glodek A."/>
            <person name="Scott J.L."/>
            <person name="Geoghagen N.S.M."/>
            <person name="Weidman J.F."/>
            <person name="Fuhrmann J.L."/>
            <person name="Nguyen D."/>
            <person name="Utterback T.R."/>
            <person name="Kelley J.M."/>
            <person name="Peterson J.D."/>
            <person name="Sadow P.W."/>
            <person name="Hanna M.C."/>
            <person name="Cotton M.D."/>
            <person name="Roberts K.M."/>
            <person name="Hurst M.A."/>
            <person name="Kaine B.P."/>
            <person name="Borodovsky M."/>
            <person name="Klenk H.-P."/>
            <person name="Fraser C.M."/>
            <person name="Smith H.O."/>
            <person name="Woese C.R."/>
            <person name="Venter J.C."/>
        </authorList>
    </citation>
    <scope>NUCLEOTIDE SEQUENCE [LARGE SCALE GENOMIC DNA]</scope>
    <source>
        <strain>ATCC 43067 / DSM 2661 / JAL-1 / JCM 10045 / NBRC 100440</strain>
    </source>
</reference>
<gene>
    <name type="ordered locus">MJ1677</name>
</gene>
<protein>
    <recommendedName>
        <fullName>UPF0056 membrane protein MJ1677</fullName>
    </recommendedName>
</protein>
<proteinExistence type="inferred from homology"/>
<accession>Q59071</accession>
<dbReference type="EMBL" id="L77117">
    <property type="protein sequence ID" value="AAB99699.1"/>
    <property type="molecule type" value="Genomic_DNA"/>
</dbReference>
<dbReference type="PIR" id="C64509">
    <property type="entry name" value="C64509"/>
</dbReference>
<dbReference type="RefSeq" id="WP_010871201.1">
    <property type="nucleotide sequence ID" value="NC_000909.1"/>
</dbReference>
<dbReference type="FunCoup" id="Q59071">
    <property type="interactions" value="1"/>
</dbReference>
<dbReference type="STRING" id="243232.MJ_1677"/>
<dbReference type="PaxDb" id="243232-MJ_1677"/>
<dbReference type="EnsemblBacteria" id="AAB99699">
    <property type="protein sequence ID" value="AAB99699"/>
    <property type="gene ID" value="MJ_1677"/>
</dbReference>
<dbReference type="GeneID" id="1452586"/>
<dbReference type="KEGG" id="mja:MJ_1677"/>
<dbReference type="eggNOG" id="arCOG01997">
    <property type="taxonomic scope" value="Archaea"/>
</dbReference>
<dbReference type="HOGENOM" id="CLU_079909_1_0_2"/>
<dbReference type="InParanoid" id="Q59071"/>
<dbReference type="OrthoDB" id="10856at2157"/>
<dbReference type="PhylomeDB" id="Q59071"/>
<dbReference type="Proteomes" id="UP000000805">
    <property type="component" value="Chromosome"/>
</dbReference>
<dbReference type="GO" id="GO:0005886">
    <property type="term" value="C:plasma membrane"/>
    <property type="evidence" value="ECO:0007669"/>
    <property type="project" value="UniProtKB-SubCell"/>
</dbReference>
<dbReference type="InterPro" id="IPR002771">
    <property type="entry name" value="Multi_antbiot-R_MarC"/>
</dbReference>
<dbReference type="NCBIfam" id="TIGR00427">
    <property type="entry name" value="NAAT family transporter"/>
    <property type="match status" value="1"/>
</dbReference>
<dbReference type="PANTHER" id="PTHR33508">
    <property type="entry name" value="UPF0056 MEMBRANE PROTEIN YHCE"/>
    <property type="match status" value="1"/>
</dbReference>
<dbReference type="PANTHER" id="PTHR33508:SF1">
    <property type="entry name" value="UPF0056 MEMBRANE PROTEIN YHCE"/>
    <property type="match status" value="1"/>
</dbReference>
<dbReference type="Pfam" id="PF01914">
    <property type="entry name" value="MarC"/>
    <property type="match status" value="1"/>
</dbReference>
<keyword id="KW-1003">Cell membrane</keyword>
<keyword id="KW-0472">Membrane</keyword>
<keyword id="KW-1185">Reference proteome</keyword>
<keyword id="KW-0812">Transmembrane</keyword>
<keyword id="KW-1133">Transmembrane helix</keyword>